<dbReference type="EMBL" id="JQ277480">
    <property type="protein sequence ID" value="AFJ42491.1"/>
    <property type="molecule type" value="mRNA"/>
</dbReference>
<dbReference type="EMBL" id="BX284606">
    <property type="protein sequence ID" value="CCD70849.1"/>
    <property type="molecule type" value="Genomic_DNA"/>
</dbReference>
<dbReference type="RefSeq" id="NP_001033548.1">
    <property type="nucleotide sequence ID" value="NM_001038459.3"/>
</dbReference>
<dbReference type="SMR" id="Q4R128"/>
<dbReference type="FunCoup" id="Q4R128">
    <property type="interactions" value="1522"/>
</dbReference>
<dbReference type="STRING" id="6239.F39C12.4.1"/>
<dbReference type="PaxDb" id="6239-F39C12.4"/>
<dbReference type="EnsemblMetazoa" id="F39C12.4.1">
    <property type="protein sequence ID" value="F39C12.4.1"/>
    <property type="gene ID" value="WBGene00044568"/>
</dbReference>
<dbReference type="GeneID" id="3896872"/>
<dbReference type="KEGG" id="cel:CELE_F39C12.4"/>
<dbReference type="UCSC" id="F39C12.4">
    <property type="organism name" value="c. elegans"/>
</dbReference>
<dbReference type="AGR" id="WB:WBGene00044568"/>
<dbReference type="CTD" id="3896872"/>
<dbReference type="WormBase" id="F39C12.4">
    <property type="protein sequence ID" value="CE38818"/>
    <property type="gene ID" value="WBGene00044568"/>
    <property type="gene designation" value="ntc-1"/>
</dbReference>
<dbReference type="eggNOG" id="ENOG502SYRY">
    <property type="taxonomic scope" value="Eukaryota"/>
</dbReference>
<dbReference type="HOGENOM" id="CLU_2374605_0_0_1"/>
<dbReference type="InParanoid" id="Q4R128"/>
<dbReference type="OMA" id="CCTQGGC"/>
<dbReference type="OrthoDB" id="10056056at2759"/>
<dbReference type="PhylomeDB" id="Q4R128"/>
<dbReference type="PRO" id="PR:Q4R128"/>
<dbReference type="Proteomes" id="UP000001940">
    <property type="component" value="Chromosome X"/>
</dbReference>
<dbReference type="Bgee" id="WBGene00044568">
    <property type="expression patterns" value="Expressed in larva and 3 other cell types or tissues"/>
</dbReference>
<dbReference type="GO" id="GO:0005576">
    <property type="term" value="C:extracellular region"/>
    <property type="evidence" value="ECO:0007669"/>
    <property type="project" value="UniProtKB-SubCell"/>
</dbReference>
<dbReference type="GO" id="GO:0005185">
    <property type="term" value="F:neurohypophyseal hormone activity"/>
    <property type="evidence" value="ECO:0007669"/>
    <property type="project" value="InterPro"/>
</dbReference>
<dbReference type="GO" id="GO:0007218">
    <property type="term" value="P:neuropeptide signaling pathway"/>
    <property type="evidence" value="ECO:0007669"/>
    <property type="project" value="UniProtKB-KW"/>
</dbReference>
<dbReference type="InterPro" id="IPR000981">
    <property type="entry name" value="Neurhyp_horm"/>
</dbReference>
<dbReference type="Pfam" id="PF00184">
    <property type="entry name" value="Hormone_5"/>
    <property type="match status" value="1"/>
</dbReference>
<comment type="function">
    <text evidence="3 4">Ligand for the G-protein coupled receptor ntr-1 (PubMed:23112335, PubMed:23112336). Plays a role in gustatory associative learning (PubMed:23112336). Also plays a role in male mating behavior (PubMed:23112335).</text>
</comment>
<comment type="subcellular location">
    <subcellularLocation>
        <location evidence="7">Secreted</location>
    </subcellularLocation>
</comment>
<comment type="tissue specificity">
    <text evidence="3 4">Detected in thermosensory AFD neurons, neurosecretory NSM cells, AVK interneurons, pharyngeal neuron M5, and the mechanosensory DVA neuron (PubMed:23112335, PubMed:23112336). Detected in male-specific CP motor neurons (PubMed:23112335).</text>
</comment>
<comment type="mass spectrometry"/>
<comment type="disruption phenotype">
    <text evidence="3 4">Viable and fertile (PubMed:23112336). Gustatory associative learning in response to salt cues is disrupted (PubMed:23112336). Males have reduced reproductive success, due to a range of aberrant mating behaviors (PubMed:23112335).</text>
</comment>
<comment type="similarity">
    <text evidence="7">Belongs to the vasopressin/oxytocin family.</text>
</comment>
<proteinExistence type="evidence at protein level"/>
<name>NTC1_CAEEL</name>
<protein>
    <recommendedName>
        <fullName evidence="5 6">Nematocin</fullName>
    </recommendedName>
</protein>
<evidence type="ECO:0000250" key="1">
    <source>
        <dbReference type="UniProtKB" id="P01175"/>
    </source>
</evidence>
<evidence type="ECO:0000255" key="2"/>
<evidence type="ECO:0000269" key="3">
    <source>
    </source>
</evidence>
<evidence type="ECO:0000269" key="4">
    <source>
    </source>
</evidence>
<evidence type="ECO:0000303" key="5">
    <source>
    </source>
</evidence>
<evidence type="ECO:0000303" key="6">
    <source>
    </source>
</evidence>
<evidence type="ECO:0000305" key="7"/>
<evidence type="ECO:0000312" key="8">
    <source>
        <dbReference type="EMBL" id="AFJ42491.1"/>
    </source>
</evidence>
<evidence type="ECO:0000312" key="9">
    <source>
        <dbReference type="Proteomes" id="UP000001940"/>
    </source>
</evidence>
<evidence type="ECO:0000312" key="10">
    <source>
        <dbReference type="WormBase" id="F39C12.4"/>
    </source>
</evidence>
<keyword id="KW-0027">Amidation</keyword>
<keyword id="KW-0085">Behavior</keyword>
<keyword id="KW-0903">Direct protein sequencing</keyword>
<keyword id="KW-1015">Disulfide bond</keyword>
<keyword id="KW-0527">Neuropeptide</keyword>
<keyword id="KW-1185">Reference proteome</keyword>
<keyword id="KW-0964">Secreted</keyword>
<keyword id="KW-0732">Signal</keyword>
<gene>
    <name evidence="5 6" type="primary">ntc-1</name>
    <name evidence="10" type="ORF">F39C12.4</name>
</gene>
<feature type="signal peptide" evidence="2">
    <location>
        <begin position="1"/>
        <end position="19"/>
    </location>
</feature>
<feature type="peptide" id="PRO_5007703221" description="Nematocin" evidence="3">
    <location>
        <begin position="20"/>
        <end position="30"/>
    </location>
</feature>
<feature type="propeptide" id="PRO_0000438123" evidence="7">
    <location>
        <begin position="31"/>
        <end position="103"/>
    </location>
</feature>
<feature type="modified residue" description="Tyrosine amide" evidence="3">
    <location>
        <position position="30"/>
    </location>
</feature>
<feature type="disulfide bond" evidence="1">
    <location>
        <begin position="20"/>
        <end position="25"/>
    </location>
</feature>
<feature type="mutagenesis site" description="Fails to activate ntr-1." evidence="4">
    <location>
        <begin position="28"/>
        <end position="30"/>
    </location>
</feature>
<accession>Q4R128</accession>
<organism evidence="9">
    <name type="scientific">Caenorhabditis elegans</name>
    <dbReference type="NCBI Taxonomy" id="6239"/>
    <lineage>
        <taxon>Eukaryota</taxon>
        <taxon>Metazoa</taxon>
        <taxon>Ecdysozoa</taxon>
        <taxon>Nematoda</taxon>
        <taxon>Chromadorea</taxon>
        <taxon>Rhabditida</taxon>
        <taxon>Rhabditina</taxon>
        <taxon>Rhabditomorpha</taxon>
        <taxon>Rhabditoidea</taxon>
        <taxon>Rhabditidae</taxon>
        <taxon>Peloderinae</taxon>
        <taxon>Caenorhabditis</taxon>
    </lineage>
</organism>
<sequence>MGSSPILLVLAISIGLASACFLNSCPYRRYGRTIRCSSCGIENEGVCISEGRCCTNEECFMSTECSYSAVCPELFCKIGHHPGYCMKKGYCCTQGGCQTSAMC</sequence>
<reference evidence="8" key="1">
    <citation type="journal article" date="2012" name="Science">
        <title>Vasopressin/oxytocin-related signaling regulates gustatory associative learning in C. elegans.</title>
        <authorList>
            <person name="Beets I."/>
            <person name="Janssen T."/>
            <person name="Meelkop E."/>
            <person name="Temmerman L."/>
            <person name="Suetens N."/>
            <person name="Rademakers S."/>
            <person name="Jansen G."/>
            <person name="Schoofs L."/>
        </authorList>
    </citation>
    <scope>NUCLEOTIDE SEQUENCE [MRNA]</scope>
    <scope>FUNCTION</scope>
    <scope>TISSUE SPECIFICITY</scope>
    <scope>DISRUPTION PHENOTYPE</scope>
    <scope>MUTAGENESIS OF 28-ARG--TYR-30</scope>
</reference>
<reference evidence="9" key="2">
    <citation type="journal article" date="1998" name="Science">
        <title>Genome sequence of the nematode C. elegans: a platform for investigating biology.</title>
        <authorList>
            <consortium name="The C. elegans sequencing consortium"/>
        </authorList>
    </citation>
    <scope>NUCLEOTIDE SEQUENCE [LARGE SCALE GENOMIC DNA]</scope>
    <source>
        <strain evidence="9">Bristol N2</strain>
    </source>
</reference>
<reference evidence="7" key="3">
    <citation type="journal article" date="2012" name="Science">
        <title>Oxytocin/vasopressin-related peptides have an ancient role in reproductive behavior.</title>
        <authorList>
            <person name="Garrison J.L."/>
            <person name="Macosko E.Z."/>
            <person name="Bernstein S."/>
            <person name="Pokala N."/>
            <person name="Albrecht D.R."/>
            <person name="Bargmann C.I."/>
        </authorList>
    </citation>
    <scope>PROTEIN SEQUENCE OF 20-30</scope>
    <scope>FUNCTION</scope>
    <scope>TISSUE SPECIFICITY</scope>
    <scope>DISRUPTION PHENOTYPE</scope>
    <scope>MASS SPECTROMETRY</scope>
    <scope>AMIDATION AT TYR-30</scope>
    <scope>IDENTIFICATION BY MASS SPECTROMETRY</scope>
</reference>